<geneLocation type="mitochondrion"/>
<organism>
    <name type="scientific">Cyanidium caldarium</name>
    <name type="common">Red alga</name>
    <dbReference type="NCBI Taxonomy" id="2771"/>
    <lineage>
        <taxon>Eukaryota</taxon>
        <taxon>Rhodophyta</taxon>
        <taxon>Bangiophyceae</taxon>
        <taxon>Cyanidiales</taxon>
        <taxon>Cyanidiaceae</taxon>
        <taxon>Cyanidium</taxon>
    </lineage>
</organism>
<accession>P48911</accession>
<comment type="function">
    <text evidence="1">Core subunit of the mitochondrial membrane respiratory chain NADH dehydrogenase (Complex I) that is believed to belong to the minimal assembly required for catalysis. Complex I functions in the transfer of electrons from NADH to the respiratory chain. The immediate electron acceptor for the enzyme is believed to be ubiquinone (By similarity).</text>
</comment>
<comment type="catalytic activity">
    <reaction>
        <text>a ubiquinone + NADH + 5 H(+)(in) = a ubiquinol + NAD(+) + 4 H(+)(out)</text>
        <dbReference type="Rhea" id="RHEA:29091"/>
        <dbReference type="Rhea" id="RHEA-COMP:9565"/>
        <dbReference type="Rhea" id="RHEA-COMP:9566"/>
        <dbReference type="ChEBI" id="CHEBI:15378"/>
        <dbReference type="ChEBI" id="CHEBI:16389"/>
        <dbReference type="ChEBI" id="CHEBI:17976"/>
        <dbReference type="ChEBI" id="CHEBI:57540"/>
        <dbReference type="ChEBI" id="CHEBI:57945"/>
        <dbReference type="EC" id="7.1.1.2"/>
    </reaction>
</comment>
<comment type="subcellular location">
    <subcellularLocation>
        <location evidence="1">Mitochondrion membrane</location>
        <topology evidence="1">Multi-pass membrane protein</topology>
    </subcellularLocation>
</comment>
<comment type="similarity">
    <text evidence="3">Belongs to the complex I subunit 3 family.</text>
</comment>
<feature type="chain" id="PRO_0000117730" description="NADH-ubiquinone oxidoreductase chain 3">
    <location>
        <begin position="1"/>
        <end position="120"/>
    </location>
</feature>
<feature type="transmembrane region" description="Helical" evidence="2">
    <location>
        <begin position="8"/>
        <end position="28"/>
    </location>
</feature>
<feature type="transmembrane region" description="Helical" evidence="2">
    <location>
        <begin position="63"/>
        <end position="83"/>
    </location>
</feature>
<feature type="transmembrane region" description="Helical" evidence="2">
    <location>
        <begin position="90"/>
        <end position="110"/>
    </location>
</feature>
<dbReference type="EC" id="7.1.1.2"/>
<dbReference type="EMBL" id="Z48930">
    <property type="protein sequence ID" value="CAA88774.1"/>
    <property type="molecule type" value="Genomic_DNA"/>
</dbReference>
<dbReference type="PIR" id="S62764">
    <property type="entry name" value="S62764"/>
</dbReference>
<dbReference type="SMR" id="P48911"/>
<dbReference type="GO" id="GO:0031966">
    <property type="term" value="C:mitochondrial membrane"/>
    <property type="evidence" value="ECO:0007669"/>
    <property type="project" value="UniProtKB-SubCell"/>
</dbReference>
<dbReference type="GO" id="GO:0030964">
    <property type="term" value="C:NADH dehydrogenase complex"/>
    <property type="evidence" value="ECO:0007669"/>
    <property type="project" value="TreeGrafter"/>
</dbReference>
<dbReference type="GO" id="GO:0008137">
    <property type="term" value="F:NADH dehydrogenase (ubiquinone) activity"/>
    <property type="evidence" value="ECO:0007669"/>
    <property type="project" value="UniProtKB-EC"/>
</dbReference>
<dbReference type="FunFam" id="1.20.58.1610:FF:000004">
    <property type="entry name" value="NADH-quinone oxidoreductase subunit A"/>
    <property type="match status" value="1"/>
</dbReference>
<dbReference type="Gene3D" id="1.20.58.1610">
    <property type="entry name" value="NADH:ubiquinone/plastoquinone oxidoreductase, chain 3"/>
    <property type="match status" value="1"/>
</dbReference>
<dbReference type="InterPro" id="IPR000440">
    <property type="entry name" value="NADH_UbQ/plastoQ_OxRdtase_su3"/>
</dbReference>
<dbReference type="InterPro" id="IPR038430">
    <property type="entry name" value="NDAH_ubi_oxred_su3_sf"/>
</dbReference>
<dbReference type="PANTHER" id="PTHR11058">
    <property type="entry name" value="NADH-UBIQUINONE OXIDOREDUCTASE CHAIN 3"/>
    <property type="match status" value="1"/>
</dbReference>
<dbReference type="PANTHER" id="PTHR11058:SF9">
    <property type="entry name" value="NADH-UBIQUINONE OXIDOREDUCTASE CHAIN 3"/>
    <property type="match status" value="1"/>
</dbReference>
<dbReference type="Pfam" id="PF00507">
    <property type="entry name" value="Oxidored_q4"/>
    <property type="match status" value="1"/>
</dbReference>
<reference key="1">
    <citation type="thesis" date="1995" institute="Justus Liebig University / Frankfurt" country="Germany">
        <authorList>
            <person name="Viehmann S."/>
        </authorList>
    </citation>
    <scope>NUCLEOTIDE SEQUENCE [GENOMIC DNA]</scope>
    <source>
        <strain>RK-1</strain>
    </source>
</reference>
<protein>
    <recommendedName>
        <fullName>NADH-ubiquinone oxidoreductase chain 3</fullName>
        <ecNumber>7.1.1.2</ecNumber>
    </recommendedName>
    <alternativeName>
        <fullName>NADH dehydrogenase subunit 3</fullName>
    </alternativeName>
</protein>
<gene>
    <name type="primary">ND3</name>
    <name type="synonym">NAD3</name>
</gene>
<name>NU3M_CYACA</name>
<keyword id="KW-0249">Electron transport</keyword>
<keyword id="KW-0472">Membrane</keyword>
<keyword id="KW-0496">Mitochondrion</keyword>
<keyword id="KW-0520">NAD</keyword>
<keyword id="KW-0679">Respiratory chain</keyword>
<keyword id="KW-1278">Translocase</keyword>
<keyword id="KW-0812">Transmembrane</keyword>
<keyword id="KW-1133">Transmembrane helix</keyword>
<keyword id="KW-0813">Transport</keyword>
<keyword id="KW-0830">Ubiquinone</keyword>
<proteinExistence type="inferred from homology"/>
<evidence type="ECO:0000250" key="1"/>
<evidence type="ECO:0000255" key="2"/>
<evidence type="ECO:0000305" key="3"/>
<sequence>MKFYFVEYFILFTYIIISFILACIISLLSYLLTTKKEDPEKTSAYECGFNPFDDTRTTFDVKFYLVAILFFNFCLEISFLFPWSIVLGNISYFGFVAIILFLFILTIGFIYEWKKGALNW</sequence>